<reference key="1">
    <citation type="journal article" date="2006" name="J. Bacteriol.">
        <title>The genome sequence of the obligately chemolithoautotrophic, facultatively anaerobic bacterium Thiobacillus denitrificans.</title>
        <authorList>
            <person name="Beller H.R."/>
            <person name="Chain P.S."/>
            <person name="Letain T.E."/>
            <person name="Chakicherla A."/>
            <person name="Larimer F.W."/>
            <person name="Richardson P.M."/>
            <person name="Coleman M.A."/>
            <person name="Wood A.P."/>
            <person name="Kelly D.P."/>
        </authorList>
    </citation>
    <scope>NUCLEOTIDE SEQUENCE [LARGE SCALE GENOMIC DNA]</scope>
    <source>
        <strain>ATCC 25259 / T1</strain>
    </source>
</reference>
<evidence type="ECO:0000255" key="1">
    <source>
        <dbReference type="HAMAP-Rule" id="MF_00046"/>
    </source>
</evidence>
<name>MURC_THIDA</name>
<comment type="function">
    <text evidence="1">Cell wall formation.</text>
</comment>
<comment type="catalytic activity">
    <reaction evidence="1">
        <text>UDP-N-acetyl-alpha-D-muramate + L-alanine + ATP = UDP-N-acetyl-alpha-D-muramoyl-L-alanine + ADP + phosphate + H(+)</text>
        <dbReference type="Rhea" id="RHEA:23372"/>
        <dbReference type="ChEBI" id="CHEBI:15378"/>
        <dbReference type="ChEBI" id="CHEBI:30616"/>
        <dbReference type="ChEBI" id="CHEBI:43474"/>
        <dbReference type="ChEBI" id="CHEBI:57972"/>
        <dbReference type="ChEBI" id="CHEBI:70757"/>
        <dbReference type="ChEBI" id="CHEBI:83898"/>
        <dbReference type="ChEBI" id="CHEBI:456216"/>
        <dbReference type="EC" id="6.3.2.8"/>
    </reaction>
</comment>
<comment type="pathway">
    <text evidence="1">Cell wall biogenesis; peptidoglycan biosynthesis.</text>
</comment>
<comment type="subcellular location">
    <subcellularLocation>
        <location evidence="1">Cytoplasm</location>
    </subcellularLocation>
</comment>
<comment type="similarity">
    <text evidence="1">Belongs to the MurCDEF family.</text>
</comment>
<organism>
    <name type="scientific">Thiobacillus denitrificans (strain ATCC 25259 / T1)</name>
    <dbReference type="NCBI Taxonomy" id="292415"/>
    <lineage>
        <taxon>Bacteria</taxon>
        <taxon>Pseudomonadati</taxon>
        <taxon>Pseudomonadota</taxon>
        <taxon>Betaproteobacteria</taxon>
        <taxon>Nitrosomonadales</taxon>
        <taxon>Thiobacillaceae</taxon>
        <taxon>Thiobacillus</taxon>
    </lineage>
</organism>
<accession>Q3SMH2</accession>
<proteinExistence type="inferred from homology"/>
<sequence length="463" mass="49305">MKHAVKHIHFIGIGGVGMSGIAEVLLNLGYAVSGSDLADNAVTQRLAKLGARIHRGHAPSNIAGADAVVTSTAVQESNPEVVAAREKKIPIVPRALMLAELMRLRQGIAIAGTHGKTTTTSLVASILGEAGMDPTYVIGGKLTAAGTNARLGQGDFLVAEADESDASFLYLTPVIAIVTNIDADHMDTYGHDFDRLKTAFVDFCQRLPFYGMAVLCIDDANVREILPRITKPITTYGFDPAAQVRAVDTRFEHGQMRFTVKREGMADLDVTLNQPGLHNVLNALAAIAVATEVGASDAAIVKALAEFHGVGRRFQRYGEHPTKDGGCYWLIDDYGHHPVEMAATLAAARGAFPGRRLVLVFQPHRYSRTRDCFEDFVKVLSETDALVLTEVYPAGEAPIVAADGRALARAVRVAGKVEPVFVENVADVAATVRDLVQADDVVLVMGAGSIGQVAPALGERDAP</sequence>
<gene>
    <name evidence="1" type="primary">murC</name>
    <name type="ordered locus">Tbd_0120</name>
</gene>
<dbReference type="EC" id="6.3.2.8" evidence="1"/>
<dbReference type="EMBL" id="CP000116">
    <property type="protein sequence ID" value="AAZ96073.1"/>
    <property type="molecule type" value="Genomic_DNA"/>
</dbReference>
<dbReference type="RefSeq" id="WP_011310633.1">
    <property type="nucleotide sequence ID" value="NC_007404.1"/>
</dbReference>
<dbReference type="SMR" id="Q3SMH2"/>
<dbReference type="STRING" id="292415.Tbd_0120"/>
<dbReference type="KEGG" id="tbd:Tbd_0120"/>
<dbReference type="eggNOG" id="COG0773">
    <property type="taxonomic scope" value="Bacteria"/>
</dbReference>
<dbReference type="HOGENOM" id="CLU_028104_2_2_4"/>
<dbReference type="OrthoDB" id="9804126at2"/>
<dbReference type="UniPathway" id="UPA00219"/>
<dbReference type="Proteomes" id="UP000008291">
    <property type="component" value="Chromosome"/>
</dbReference>
<dbReference type="GO" id="GO:0005737">
    <property type="term" value="C:cytoplasm"/>
    <property type="evidence" value="ECO:0007669"/>
    <property type="project" value="UniProtKB-SubCell"/>
</dbReference>
<dbReference type="GO" id="GO:0005524">
    <property type="term" value="F:ATP binding"/>
    <property type="evidence" value="ECO:0007669"/>
    <property type="project" value="UniProtKB-UniRule"/>
</dbReference>
<dbReference type="GO" id="GO:0008763">
    <property type="term" value="F:UDP-N-acetylmuramate-L-alanine ligase activity"/>
    <property type="evidence" value="ECO:0007669"/>
    <property type="project" value="UniProtKB-UniRule"/>
</dbReference>
<dbReference type="GO" id="GO:0051301">
    <property type="term" value="P:cell division"/>
    <property type="evidence" value="ECO:0007669"/>
    <property type="project" value="UniProtKB-KW"/>
</dbReference>
<dbReference type="GO" id="GO:0071555">
    <property type="term" value="P:cell wall organization"/>
    <property type="evidence" value="ECO:0007669"/>
    <property type="project" value="UniProtKB-KW"/>
</dbReference>
<dbReference type="GO" id="GO:0009252">
    <property type="term" value="P:peptidoglycan biosynthetic process"/>
    <property type="evidence" value="ECO:0007669"/>
    <property type="project" value="UniProtKB-UniRule"/>
</dbReference>
<dbReference type="GO" id="GO:0008360">
    <property type="term" value="P:regulation of cell shape"/>
    <property type="evidence" value="ECO:0007669"/>
    <property type="project" value="UniProtKB-KW"/>
</dbReference>
<dbReference type="FunFam" id="3.40.1190.10:FF:000001">
    <property type="entry name" value="UDP-N-acetylmuramate--L-alanine ligase"/>
    <property type="match status" value="1"/>
</dbReference>
<dbReference type="Gene3D" id="3.90.190.20">
    <property type="entry name" value="Mur ligase, C-terminal domain"/>
    <property type="match status" value="1"/>
</dbReference>
<dbReference type="Gene3D" id="3.40.1190.10">
    <property type="entry name" value="Mur-like, catalytic domain"/>
    <property type="match status" value="1"/>
</dbReference>
<dbReference type="Gene3D" id="3.40.50.720">
    <property type="entry name" value="NAD(P)-binding Rossmann-like Domain"/>
    <property type="match status" value="1"/>
</dbReference>
<dbReference type="HAMAP" id="MF_00046">
    <property type="entry name" value="MurC"/>
    <property type="match status" value="1"/>
</dbReference>
<dbReference type="InterPro" id="IPR036565">
    <property type="entry name" value="Mur-like_cat_sf"/>
</dbReference>
<dbReference type="InterPro" id="IPR004101">
    <property type="entry name" value="Mur_ligase_C"/>
</dbReference>
<dbReference type="InterPro" id="IPR036615">
    <property type="entry name" value="Mur_ligase_C_dom_sf"/>
</dbReference>
<dbReference type="InterPro" id="IPR013221">
    <property type="entry name" value="Mur_ligase_cen"/>
</dbReference>
<dbReference type="InterPro" id="IPR000713">
    <property type="entry name" value="Mur_ligase_N"/>
</dbReference>
<dbReference type="InterPro" id="IPR050061">
    <property type="entry name" value="MurCDEF_pg_biosynth"/>
</dbReference>
<dbReference type="InterPro" id="IPR005758">
    <property type="entry name" value="UDP-N-AcMur_Ala_ligase_MurC"/>
</dbReference>
<dbReference type="NCBIfam" id="TIGR01082">
    <property type="entry name" value="murC"/>
    <property type="match status" value="1"/>
</dbReference>
<dbReference type="PANTHER" id="PTHR43445:SF3">
    <property type="entry name" value="UDP-N-ACETYLMURAMATE--L-ALANINE LIGASE"/>
    <property type="match status" value="1"/>
</dbReference>
<dbReference type="PANTHER" id="PTHR43445">
    <property type="entry name" value="UDP-N-ACETYLMURAMATE--L-ALANINE LIGASE-RELATED"/>
    <property type="match status" value="1"/>
</dbReference>
<dbReference type="Pfam" id="PF01225">
    <property type="entry name" value="Mur_ligase"/>
    <property type="match status" value="1"/>
</dbReference>
<dbReference type="Pfam" id="PF02875">
    <property type="entry name" value="Mur_ligase_C"/>
    <property type="match status" value="1"/>
</dbReference>
<dbReference type="Pfam" id="PF08245">
    <property type="entry name" value="Mur_ligase_M"/>
    <property type="match status" value="1"/>
</dbReference>
<dbReference type="SUPFAM" id="SSF51984">
    <property type="entry name" value="MurCD N-terminal domain"/>
    <property type="match status" value="1"/>
</dbReference>
<dbReference type="SUPFAM" id="SSF53623">
    <property type="entry name" value="MurD-like peptide ligases, catalytic domain"/>
    <property type="match status" value="1"/>
</dbReference>
<dbReference type="SUPFAM" id="SSF53244">
    <property type="entry name" value="MurD-like peptide ligases, peptide-binding domain"/>
    <property type="match status" value="1"/>
</dbReference>
<keyword id="KW-0067">ATP-binding</keyword>
<keyword id="KW-0131">Cell cycle</keyword>
<keyword id="KW-0132">Cell division</keyword>
<keyword id="KW-0133">Cell shape</keyword>
<keyword id="KW-0961">Cell wall biogenesis/degradation</keyword>
<keyword id="KW-0963">Cytoplasm</keyword>
<keyword id="KW-0436">Ligase</keyword>
<keyword id="KW-0547">Nucleotide-binding</keyword>
<keyword id="KW-0573">Peptidoglycan synthesis</keyword>
<keyword id="KW-1185">Reference proteome</keyword>
<protein>
    <recommendedName>
        <fullName evidence="1">UDP-N-acetylmuramate--L-alanine ligase</fullName>
        <ecNumber evidence="1">6.3.2.8</ecNumber>
    </recommendedName>
    <alternativeName>
        <fullName evidence="1">UDP-N-acetylmuramoyl-L-alanine synthetase</fullName>
    </alternativeName>
</protein>
<feature type="chain" id="PRO_0000242612" description="UDP-N-acetylmuramate--L-alanine ligase">
    <location>
        <begin position="1"/>
        <end position="463"/>
    </location>
</feature>
<feature type="binding site" evidence="1">
    <location>
        <begin position="112"/>
        <end position="118"/>
    </location>
    <ligand>
        <name>ATP</name>
        <dbReference type="ChEBI" id="CHEBI:30616"/>
    </ligand>
</feature>